<protein>
    <recommendedName>
        <fullName evidence="1">Pseudouridine-5'-phosphate glycosidase</fullName>
        <shortName evidence="1">PsiMP glycosidase</shortName>
        <ecNumber evidence="1">4.2.1.70</ecNumber>
    </recommendedName>
</protein>
<evidence type="ECO:0000255" key="1">
    <source>
        <dbReference type="HAMAP-Rule" id="MF_01876"/>
    </source>
</evidence>
<organism>
    <name type="scientific">Roseobacter denitrificans (strain ATCC 33942 / OCh 114)</name>
    <name type="common">Erythrobacter sp. (strain OCh 114)</name>
    <name type="synonym">Roseobacter denitrificans</name>
    <dbReference type="NCBI Taxonomy" id="375451"/>
    <lineage>
        <taxon>Bacteria</taxon>
        <taxon>Pseudomonadati</taxon>
        <taxon>Pseudomonadota</taxon>
        <taxon>Alphaproteobacteria</taxon>
        <taxon>Rhodobacterales</taxon>
        <taxon>Roseobacteraceae</taxon>
        <taxon>Roseobacter</taxon>
    </lineage>
</organism>
<keyword id="KW-0326">Glycosidase</keyword>
<keyword id="KW-0378">Hydrolase</keyword>
<keyword id="KW-0456">Lyase</keyword>
<keyword id="KW-0464">Manganese</keyword>
<keyword id="KW-0479">Metal-binding</keyword>
<keyword id="KW-1185">Reference proteome</keyword>
<gene>
    <name evidence="1" type="primary">psuG</name>
    <name type="ordered locus">RD1_2734</name>
</gene>
<proteinExistence type="inferred from homology"/>
<name>PSUG_ROSDO</name>
<sequence>MTNLPLRHSAEVAAAKAAGRPIVALESTIITHGMPYPQNLEVARQVEDDLRAAGVTPATIAVMDGTLHIGLEAHQLEALAQAKGVAKLSRADIAACMATGGTGATTVSATMIAAHLAGISVFATGGIGGVHRGAESSFDVSADLLELAQTPVTVVAAGAKAILDVAKTLEVLETQGVPVITVGQDSFPAFWSAESVFKSPLRMDDPVGIAAAHQMRVDLGLPGGQLVANPIPHTDEIPATELAPIIATAQADAEKHGIKGKAVTPYLLQRIYELTQGRSLTANIALVRNNARLAGAIAQALIANARIAGK</sequence>
<dbReference type="EC" id="4.2.1.70" evidence="1"/>
<dbReference type="EMBL" id="CP000362">
    <property type="protein sequence ID" value="ABG32269.1"/>
    <property type="molecule type" value="Genomic_DNA"/>
</dbReference>
<dbReference type="RefSeq" id="WP_011568886.1">
    <property type="nucleotide sequence ID" value="NC_008209.1"/>
</dbReference>
<dbReference type="SMR" id="Q165S4"/>
<dbReference type="STRING" id="375451.RD1_2734"/>
<dbReference type="KEGG" id="rde:RD1_2734"/>
<dbReference type="eggNOG" id="COG2313">
    <property type="taxonomic scope" value="Bacteria"/>
</dbReference>
<dbReference type="HOGENOM" id="CLU_012201_0_1_5"/>
<dbReference type="OrthoDB" id="9805870at2"/>
<dbReference type="Proteomes" id="UP000007029">
    <property type="component" value="Chromosome"/>
</dbReference>
<dbReference type="GO" id="GO:0005737">
    <property type="term" value="C:cytoplasm"/>
    <property type="evidence" value="ECO:0007669"/>
    <property type="project" value="TreeGrafter"/>
</dbReference>
<dbReference type="GO" id="GO:0016798">
    <property type="term" value="F:hydrolase activity, acting on glycosyl bonds"/>
    <property type="evidence" value="ECO:0007669"/>
    <property type="project" value="UniProtKB-KW"/>
</dbReference>
<dbReference type="GO" id="GO:0046872">
    <property type="term" value="F:metal ion binding"/>
    <property type="evidence" value="ECO:0007669"/>
    <property type="project" value="UniProtKB-KW"/>
</dbReference>
<dbReference type="GO" id="GO:0004730">
    <property type="term" value="F:pseudouridylate synthase activity"/>
    <property type="evidence" value="ECO:0007669"/>
    <property type="project" value="UniProtKB-UniRule"/>
</dbReference>
<dbReference type="GO" id="GO:0046113">
    <property type="term" value="P:nucleobase catabolic process"/>
    <property type="evidence" value="ECO:0007669"/>
    <property type="project" value="UniProtKB-UniRule"/>
</dbReference>
<dbReference type="Gene3D" id="3.40.1790.10">
    <property type="entry name" value="Indigoidine synthase domain"/>
    <property type="match status" value="1"/>
</dbReference>
<dbReference type="HAMAP" id="MF_01876">
    <property type="entry name" value="PsiMP_glycosidase"/>
    <property type="match status" value="1"/>
</dbReference>
<dbReference type="InterPro" id="IPR022830">
    <property type="entry name" value="Indigdn_synthA-like"/>
</dbReference>
<dbReference type="InterPro" id="IPR007342">
    <property type="entry name" value="PsuG"/>
</dbReference>
<dbReference type="PANTHER" id="PTHR42909:SF1">
    <property type="entry name" value="CARBOHYDRATE KINASE PFKB DOMAIN-CONTAINING PROTEIN"/>
    <property type="match status" value="1"/>
</dbReference>
<dbReference type="PANTHER" id="PTHR42909">
    <property type="entry name" value="ZGC:136858"/>
    <property type="match status" value="1"/>
</dbReference>
<dbReference type="Pfam" id="PF04227">
    <property type="entry name" value="Indigoidine_A"/>
    <property type="match status" value="1"/>
</dbReference>
<dbReference type="SUPFAM" id="SSF110581">
    <property type="entry name" value="Indigoidine synthase A-like"/>
    <property type="match status" value="1"/>
</dbReference>
<accession>Q165S4</accession>
<reference key="1">
    <citation type="journal article" date="2007" name="J. Bacteriol.">
        <title>The complete genome sequence of Roseobacter denitrificans reveals a mixotrophic rather than photosynthetic metabolism.</title>
        <authorList>
            <person name="Swingley W.D."/>
            <person name="Sadekar S."/>
            <person name="Mastrian S.D."/>
            <person name="Matthies H.J."/>
            <person name="Hao J."/>
            <person name="Ramos H."/>
            <person name="Acharya C.R."/>
            <person name="Conrad A.L."/>
            <person name="Taylor H.L."/>
            <person name="Dejesa L.C."/>
            <person name="Shah M.K."/>
            <person name="O'Huallachain M.E."/>
            <person name="Lince M.T."/>
            <person name="Blankenship R.E."/>
            <person name="Beatty J.T."/>
            <person name="Touchman J.W."/>
        </authorList>
    </citation>
    <scope>NUCLEOTIDE SEQUENCE [LARGE SCALE GENOMIC DNA]</scope>
    <source>
        <strain>ATCC 33942 / OCh 114</strain>
    </source>
</reference>
<feature type="chain" id="PRO_0000390542" description="Pseudouridine-5'-phosphate glycosidase">
    <location>
        <begin position="1"/>
        <end position="310"/>
    </location>
</feature>
<feature type="active site" description="Proton donor" evidence="1">
    <location>
        <position position="26"/>
    </location>
</feature>
<feature type="active site" description="Nucleophile" evidence="1">
    <location>
        <position position="160"/>
    </location>
</feature>
<feature type="binding site" evidence="1">
    <location>
        <position position="87"/>
    </location>
    <ligand>
        <name>substrate</name>
    </ligand>
</feature>
<feature type="binding site" evidence="1">
    <location>
        <position position="107"/>
    </location>
    <ligand>
        <name>substrate</name>
    </ligand>
</feature>
<feature type="binding site" evidence="1">
    <location>
        <position position="139"/>
    </location>
    <ligand>
        <name>Mn(2+)</name>
        <dbReference type="ChEBI" id="CHEBI:29035"/>
    </ligand>
</feature>
<feature type="binding site" evidence="1">
    <location>
        <begin position="141"/>
        <end position="143"/>
    </location>
    <ligand>
        <name>substrate</name>
    </ligand>
</feature>
<comment type="function">
    <text evidence="1">Catalyzes the reversible cleavage of pseudouridine 5'-phosphate (PsiMP) to ribose 5-phosphate and uracil. Functions biologically in the cleavage direction, as part of a pseudouridine degradation pathway.</text>
</comment>
<comment type="catalytic activity">
    <reaction evidence="1">
        <text>D-ribose 5-phosphate + uracil = psi-UMP + H2O</text>
        <dbReference type="Rhea" id="RHEA:18337"/>
        <dbReference type="ChEBI" id="CHEBI:15377"/>
        <dbReference type="ChEBI" id="CHEBI:17568"/>
        <dbReference type="ChEBI" id="CHEBI:58380"/>
        <dbReference type="ChEBI" id="CHEBI:78346"/>
        <dbReference type="EC" id="4.2.1.70"/>
    </reaction>
</comment>
<comment type="cofactor">
    <cofactor evidence="1">
        <name>Mn(2+)</name>
        <dbReference type="ChEBI" id="CHEBI:29035"/>
    </cofactor>
    <text evidence="1">Binds 1 Mn(2+) ion per subunit.</text>
</comment>
<comment type="subunit">
    <text evidence="1">Homotrimer.</text>
</comment>
<comment type="similarity">
    <text evidence="1">Belongs to the pseudouridine-5'-phosphate glycosidase family.</text>
</comment>